<evidence type="ECO:0000255" key="1">
    <source>
        <dbReference type="HAMAP-Rule" id="MF_00235"/>
    </source>
</evidence>
<keyword id="KW-0067">ATP-binding</keyword>
<keyword id="KW-0963">Cytoplasm</keyword>
<keyword id="KW-0418">Kinase</keyword>
<keyword id="KW-0545">Nucleotide biosynthesis</keyword>
<keyword id="KW-0547">Nucleotide-binding</keyword>
<keyword id="KW-0808">Transferase</keyword>
<accession>B1Z772</accession>
<comment type="function">
    <text evidence="1">Catalyzes the reversible transfer of the terminal phosphate group between ATP and AMP. Plays an important role in cellular energy homeostasis and in adenine nucleotide metabolism.</text>
</comment>
<comment type="catalytic activity">
    <reaction evidence="1">
        <text>AMP + ATP = 2 ADP</text>
        <dbReference type="Rhea" id="RHEA:12973"/>
        <dbReference type="ChEBI" id="CHEBI:30616"/>
        <dbReference type="ChEBI" id="CHEBI:456215"/>
        <dbReference type="ChEBI" id="CHEBI:456216"/>
        <dbReference type="EC" id="2.7.4.3"/>
    </reaction>
</comment>
<comment type="pathway">
    <text evidence="1">Purine metabolism; AMP biosynthesis via salvage pathway; AMP from ADP: step 1/1.</text>
</comment>
<comment type="subunit">
    <text evidence="1">Monomer.</text>
</comment>
<comment type="subcellular location">
    <subcellularLocation>
        <location evidence="1">Cytoplasm</location>
    </subcellularLocation>
</comment>
<comment type="domain">
    <text evidence="1">Consists of three domains, a large central CORE domain and two small peripheral domains, NMPbind and LID, which undergo movements during catalysis. The LID domain closes over the site of phosphoryl transfer upon ATP binding. Assembling and dissambling the active center during each catalytic cycle provides an effective means to prevent ATP hydrolysis.</text>
</comment>
<comment type="similarity">
    <text evidence="1">Belongs to the adenylate kinase family.</text>
</comment>
<organism>
    <name type="scientific">Methylorubrum populi (strain ATCC BAA-705 / NCIMB 13946 / BJ001)</name>
    <name type="common">Methylobacterium populi</name>
    <dbReference type="NCBI Taxonomy" id="441620"/>
    <lineage>
        <taxon>Bacteria</taxon>
        <taxon>Pseudomonadati</taxon>
        <taxon>Pseudomonadota</taxon>
        <taxon>Alphaproteobacteria</taxon>
        <taxon>Hyphomicrobiales</taxon>
        <taxon>Methylobacteriaceae</taxon>
        <taxon>Methylorubrum</taxon>
    </lineage>
</organism>
<reference key="1">
    <citation type="submission" date="2008-04" db="EMBL/GenBank/DDBJ databases">
        <title>Complete sequence of chromosome of Methylobacterium populi BJ001.</title>
        <authorList>
            <consortium name="US DOE Joint Genome Institute"/>
            <person name="Copeland A."/>
            <person name="Lucas S."/>
            <person name="Lapidus A."/>
            <person name="Glavina del Rio T."/>
            <person name="Dalin E."/>
            <person name="Tice H."/>
            <person name="Bruce D."/>
            <person name="Goodwin L."/>
            <person name="Pitluck S."/>
            <person name="Chertkov O."/>
            <person name="Brettin T."/>
            <person name="Detter J.C."/>
            <person name="Han C."/>
            <person name="Kuske C.R."/>
            <person name="Schmutz J."/>
            <person name="Larimer F."/>
            <person name="Land M."/>
            <person name="Hauser L."/>
            <person name="Kyrpides N."/>
            <person name="Mikhailova N."/>
            <person name="Marx C."/>
            <person name="Richardson P."/>
        </authorList>
    </citation>
    <scope>NUCLEOTIDE SEQUENCE [LARGE SCALE GENOMIC DNA]</scope>
    <source>
        <strain>ATCC BAA-705 / NCIMB 13946 / BJ001</strain>
    </source>
</reference>
<name>KAD_METPB</name>
<feature type="chain" id="PRO_1000100583" description="Adenylate kinase">
    <location>
        <begin position="1"/>
        <end position="200"/>
    </location>
</feature>
<feature type="region of interest" description="NMP" evidence="1">
    <location>
        <begin position="30"/>
        <end position="59"/>
    </location>
</feature>
<feature type="region of interest" description="LID" evidence="1">
    <location>
        <begin position="126"/>
        <end position="142"/>
    </location>
</feature>
<feature type="binding site" evidence="1">
    <location>
        <begin position="10"/>
        <end position="15"/>
    </location>
    <ligand>
        <name>ATP</name>
        <dbReference type="ChEBI" id="CHEBI:30616"/>
    </ligand>
</feature>
<feature type="binding site" evidence="1">
    <location>
        <position position="31"/>
    </location>
    <ligand>
        <name>AMP</name>
        <dbReference type="ChEBI" id="CHEBI:456215"/>
    </ligand>
</feature>
<feature type="binding site" evidence="1">
    <location>
        <position position="36"/>
    </location>
    <ligand>
        <name>AMP</name>
        <dbReference type="ChEBI" id="CHEBI:456215"/>
    </ligand>
</feature>
<feature type="binding site" evidence="1">
    <location>
        <begin position="57"/>
        <end position="59"/>
    </location>
    <ligand>
        <name>AMP</name>
        <dbReference type="ChEBI" id="CHEBI:456215"/>
    </ligand>
</feature>
<feature type="binding site" evidence="1">
    <location>
        <begin position="85"/>
        <end position="88"/>
    </location>
    <ligand>
        <name>AMP</name>
        <dbReference type="ChEBI" id="CHEBI:456215"/>
    </ligand>
</feature>
<feature type="binding site" evidence="1">
    <location>
        <position position="92"/>
    </location>
    <ligand>
        <name>AMP</name>
        <dbReference type="ChEBI" id="CHEBI:456215"/>
    </ligand>
</feature>
<feature type="binding site" evidence="1">
    <location>
        <position position="127"/>
    </location>
    <ligand>
        <name>ATP</name>
        <dbReference type="ChEBI" id="CHEBI:30616"/>
    </ligand>
</feature>
<feature type="binding site" evidence="1">
    <location>
        <position position="139"/>
    </location>
    <ligand>
        <name>AMP</name>
        <dbReference type="ChEBI" id="CHEBI:456215"/>
    </ligand>
</feature>
<feature type="binding site" evidence="1">
    <location>
        <position position="150"/>
    </location>
    <ligand>
        <name>AMP</name>
        <dbReference type="ChEBI" id="CHEBI:456215"/>
    </ligand>
</feature>
<feature type="binding site" evidence="1">
    <location>
        <position position="178"/>
    </location>
    <ligand>
        <name>ATP</name>
        <dbReference type="ChEBI" id="CHEBI:30616"/>
    </ligand>
</feature>
<proteinExistence type="inferred from homology"/>
<dbReference type="EC" id="2.7.4.3" evidence="1"/>
<dbReference type="EMBL" id="CP001029">
    <property type="protein sequence ID" value="ACB80305.1"/>
    <property type="molecule type" value="Genomic_DNA"/>
</dbReference>
<dbReference type="RefSeq" id="WP_012454041.1">
    <property type="nucleotide sequence ID" value="NC_010725.1"/>
</dbReference>
<dbReference type="SMR" id="B1Z772"/>
<dbReference type="STRING" id="441620.Mpop_2143"/>
<dbReference type="KEGG" id="mpo:Mpop_2143"/>
<dbReference type="eggNOG" id="COG0563">
    <property type="taxonomic scope" value="Bacteria"/>
</dbReference>
<dbReference type="HOGENOM" id="CLU_032354_1_2_5"/>
<dbReference type="OrthoDB" id="9805030at2"/>
<dbReference type="UniPathway" id="UPA00588">
    <property type="reaction ID" value="UER00649"/>
</dbReference>
<dbReference type="Proteomes" id="UP000007136">
    <property type="component" value="Chromosome"/>
</dbReference>
<dbReference type="GO" id="GO:0005737">
    <property type="term" value="C:cytoplasm"/>
    <property type="evidence" value="ECO:0007669"/>
    <property type="project" value="UniProtKB-SubCell"/>
</dbReference>
<dbReference type="GO" id="GO:0004017">
    <property type="term" value="F:adenylate kinase activity"/>
    <property type="evidence" value="ECO:0007669"/>
    <property type="project" value="UniProtKB-UniRule"/>
</dbReference>
<dbReference type="GO" id="GO:0005524">
    <property type="term" value="F:ATP binding"/>
    <property type="evidence" value="ECO:0007669"/>
    <property type="project" value="UniProtKB-UniRule"/>
</dbReference>
<dbReference type="GO" id="GO:0044209">
    <property type="term" value="P:AMP salvage"/>
    <property type="evidence" value="ECO:0007669"/>
    <property type="project" value="UniProtKB-UniRule"/>
</dbReference>
<dbReference type="CDD" id="cd01428">
    <property type="entry name" value="ADK"/>
    <property type="match status" value="1"/>
</dbReference>
<dbReference type="Gene3D" id="3.40.50.300">
    <property type="entry name" value="P-loop containing nucleotide triphosphate hydrolases"/>
    <property type="match status" value="1"/>
</dbReference>
<dbReference type="HAMAP" id="MF_00235">
    <property type="entry name" value="Adenylate_kinase_Adk"/>
    <property type="match status" value="1"/>
</dbReference>
<dbReference type="InterPro" id="IPR006259">
    <property type="entry name" value="Adenyl_kin_sub"/>
</dbReference>
<dbReference type="InterPro" id="IPR000850">
    <property type="entry name" value="Adenylat/UMP-CMP_kin"/>
</dbReference>
<dbReference type="InterPro" id="IPR033690">
    <property type="entry name" value="Adenylat_kinase_CS"/>
</dbReference>
<dbReference type="InterPro" id="IPR027417">
    <property type="entry name" value="P-loop_NTPase"/>
</dbReference>
<dbReference type="NCBIfam" id="TIGR01351">
    <property type="entry name" value="adk"/>
    <property type="match status" value="1"/>
</dbReference>
<dbReference type="NCBIfam" id="NF001381">
    <property type="entry name" value="PRK00279.1-3"/>
    <property type="match status" value="1"/>
</dbReference>
<dbReference type="NCBIfam" id="NF011100">
    <property type="entry name" value="PRK14527.1"/>
    <property type="match status" value="1"/>
</dbReference>
<dbReference type="NCBIfam" id="NF011101">
    <property type="entry name" value="PRK14528.1"/>
    <property type="match status" value="1"/>
</dbReference>
<dbReference type="NCBIfam" id="NF011104">
    <property type="entry name" value="PRK14531.1"/>
    <property type="match status" value="1"/>
</dbReference>
<dbReference type="NCBIfam" id="NF011105">
    <property type="entry name" value="PRK14532.1"/>
    <property type="match status" value="1"/>
</dbReference>
<dbReference type="PANTHER" id="PTHR23359">
    <property type="entry name" value="NUCLEOTIDE KINASE"/>
    <property type="match status" value="1"/>
</dbReference>
<dbReference type="Pfam" id="PF00406">
    <property type="entry name" value="ADK"/>
    <property type="match status" value="1"/>
</dbReference>
<dbReference type="PRINTS" id="PR00094">
    <property type="entry name" value="ADENYLTKNASE"/>
</dbReference>
<dbReference type="SUPFAM" id="SSF52540">
    <property type="entry name" value="P-loop containing nucleoside triphosphate hydrolases"/>
    <property type="match status" value="1"/>
</dbReference>
<dbReference type="PROSITE" id="PS00113">
    <property type="entry name" value="ADENYLATE_KINASE"/>
    <property type="match status" value="1"/>
</dbReference>
<protein>
    <recommendedName>
        <fullName evidence="1">Adenylate kinase</fullName>
        <shortName evidence="1">AK</shortName>
        <ecNumber evidence="1">2.7.4.3</ecNumber>
    </recommendedName>
    <alternativeName>
        <fullName evidence="1">ATP-AMP transphosphorylase</fullName>
    </alternativeName>
    <alternativeName>
        <fullName evidence="1">ATP:AMP phosphotransferase</fullName>
    </alternativeName>
    <alternativeName>
        <fullName evidence="1">Adenylate monophosphate kinase</fullName>
    </alternativeName>
</protein>
<sequence length="200" mass="21353">MRIILLGPPGAGKGTQSERIVERYRVPQLSTGDMLRAAVAAGTPVGLEAKSIMESGGLVPDAVVVGIVADRIEEADARDGFILDGFPRTVEQAKALDAMLAEKGIALDAVVEFVVDENALVGRIAKRAEETAARGQPVRKDDTPEVFKTRLDAYKRQTAPLSDYYAGTGLLRKIDGMKPIDEVTGDVTGLLDGFREKATS</sequence>
<gene>
    <name evidence="1" type="primary">adk</name>
    <name type="ordered locus">Mpop_2143</name>
</gene>